<accession>O73689</accession>
<accession>O57461</accession>
<comment type="function">
    <text evidence="5 8 9 10 11 12 13">Transcriptional activator that induces expression of multiple genes including pax3, en2, snai2/slug, feb and a subset of wnt genes. Has multiple key roles in the regulation of neural induction and neurogenesis: acts as a neural competence factor, sensitizing the presumptive neuroectoderm to respond to subsequent neuralizing signals. Promotes both preplacodal cell fates and neural crest cell fates, two of the cell populations that arise from the neural plate border. Cooperates with pax3 in concert with wnt signaling to determine neural crest fate. Synergizes with the bmp-inhibitor noggin/nog and acts through the wnt pathway to induce expression of en2. May bind to the minimal GLI-consensus sequence 5'-TGGGTGGTC-3'.</text>
</comment>
<comment type="subcellular location">
    <subcellularLocation>
        <location evidence="12">Nucleus</location>
    </subcellularLocation>
    <subcellularLocation>
        <location evidence="1">Cytoplasm</location>
    </subcellularLocation>
</comment>
<comment type="tissue specificity">
    <text evidence="5 6 7 10 11 12 13">During early gastrula stages, widely expressed in the dorsal ectoderm. At mid-gastrula, expressed throughout the presumptive neural plate and at late gastrula, expression gradually diminishes in the dorsal midline and increases in the anterior folds. By early neurula stage, expression becomes restricted to the lateral edges of the neural plate, corresponding to the presumptive dorsal neural plate and neural crest, and in flanking ectoderm. In early tailbud stages (stages 22-23), expressed in the dorsal forebrain, midbrain and hindbrain. Subsequently expressed in the telencephalon and at the diencephalon/mesencephalon boundary. In the spinal cord, expression is restricted to the dorsal most region including the roof plate. Also expressed in the somites but not in eye vesicles. At larval stages, expressed mainly in the dorsal neural tube throughout its anteroposterior axis.</text>
</comment>
<comment type="developmental stage">
    <text evidence="7 11 12 13">Expressed zygotically from the blastula stage (stage 8) and peaks in the gastrula with lower expression persisting into tailbud stages.</text>
</comment>
<comment type="induction">
    <text evidence="4 6 11">By chrd/chordin, zic1, zic2, zic3 and zic5. Suppressed by bmp signaling.</text>
</comment>
<comment type="domain">
    <text evidence="1">The C2H2-type 3, 4 and 5 zinc finger domains are necessary for transcription activation (By similarity). Removal of the C-terminal regulatory domain increases activity.</text>
</comment>
<comment type="similarity">
    <text evidence="14">Belongs to the GLI C2H2-type zinc-finger protein family.</text>
</comment>
<feature type="chain" id="PRO_0000047246" description="Zinc finger protein ZIC 1">
    <location>
        <begin position="1"/>
        <end position="443"/>
    </location>
</feature>
<feature type="zinc finger region" description="C2H2-type 1; atypical" evidence="2">
    <location>
        <begin position="221"/>
        <end position="256"/>
    </location>
</feature>
<feature type="zinc finger region" description="C2H2-type 2; atypical" evidence="2">
    <location>
        <begin position="265"/>
        <end position="292"/>
    </location>
</feature>
<feature type="zinc finger region" description="C2H2-type 3" evidence="2">
    <location>
        <begin position="298"/>
        <end position="322"/>
    </location>
</feature>
<feature type="zinc finger region" description="C2H2-type 4" evidence="2">
    <location>
        <begin position="328"/>
        <end position="352"/>
    </location>
</feature>
<feature type="zinc finger region" description="C2H2-type 5" evidence="2">
    <location>
        <begin position="358"/>
        <end position="380"/>
    </location>
</feature>
<feature type="region of interest" description="Disordered" evidence="3">
    <location>
        <begin position="371"/>
        <end position="433"/>
    </location>
</feature>
<feature type="region of interest" description="Negatively regulates transcriptional activity">
    <location>
        <begin position="408"/>
        <end position="443"/>
    </location>
</feature>
<feature type="compositionally biased region" description="Low complexity" evidence="3">
    <location>
        <begin position="383"/>
        <end position="396"/>
    </location>
</feature>
<feature type="compositionally biased region" description="Polar residues" evidence="3">
    <location>
        <begin position="397"/>
        <end position="413"/>
    </location>
</feature>
<feature type="compositionally biased region" description="Low complexity" evidence="3">
    <location>
        <begin position="414"/>
        <end position="433"/>
    </location>
</feature>
<feature type="sequence conflict" description="In Ref. 2; AAB99946." evidence="14" ref="2">
    <original>A</original>
    <variation>T</variation>
    <location>
        <position position="5"/>
    </location>
</feature>
<gene>
    <name type="primary">zic1</name>
    <name type="synonym">opl</name>
</gene>
<keyword id="KW-0010">Activator</keyword>
<keyword id="KW-0963">Cytoplasm</keyword>
<keyword id="KW-0217">Developmental protein</keyword>
<keyword id="KW-0221">Differentiation</keyword>
<keyword id="KW-0238">DNA-binding</keyword>
<keyword id="KW-0479">Metal-binding</keyword>
<keyword id="KW-0524">Neurogenesis</keyword>
<keyword id="KW-0539">Nucleus</keyword>
<keyword id="KW-1185">Reference proteome</keyword>
<keyword id="KW-0677">Repeat</keyword>
<keyword id="KW-0804">Transcription</keyword>
<keyword id="KW-0805">Transcription regulation</keyword>
<keyword id="KW-0879">Wnt signaling pathway</keyword>
<keyword id="KW-0862">Zinc</keyword>
<keyword id="KW-0863">Zinc-finger</keyword>
<dbReference type="EMBL" id="AF022927">
    <property type="protein sequence ID" value="AAC14214.1"/>
    <property type="molecule type" value="mRNA"/>
</dbReference>
<dbReference type="EMBL" id="AF028805">
    <property type="protein sequence ID" value="AAB99946.1"/>
    <property type="molecule type" value="mRNA"/>
</dbReference>
<dbReference type="EMBL" id="AB009564">
    <property type="protein sequence ID" value="BAA33406.1"/>
    <property type="molecule type" value="mRNA"/>
</dbReference>
<dbReference type="RefSeq" id="NP_001083799.1">
    <property type="nucleotide sequence ID" value="NM_001090330.1"/>
</dbReference>
<dbReference type="SMR" id="O73689"/>
<dbReference type="GeneID" id="399124"/>
<dbReference type="KEGG" id="xla:399124"/>
<dbReference type="AGR" id="Xenbase:XB-GENE-864815"/>
<dbReference type="CTD" id="399124"/>
<dbReference type="Xenbase" id="XB-GENE-864815">
    <property type="gene designation" value="zic1.S"/>
</dbReference>
<dbReference type="OMA" id="HICVWEE"/>
<dbReference type="OrthoDB" id="3214149at2759"/>
<dbReference type="Proteomes" id="UP000186698">
    <property type="component" value="Chromosome 5S"/>
</dbReference>
<dbReference type="Bgee" id="399124">
    <property type="expression patterns" value="Expressed in gastrula and 6 other cell types or tissues"/>
</dbReference>
<dbReference type="GO" id="GO:0005737">
    <property type="term" value="C:cytoplasm"/>
    <property type="evidence" value="ECO:0000250"/>
    <property type="project" value="UniProtKB"/>
</dbReference>
<dbReference type="GO" id="GO:0005634">
    <property type="term" value="C:nucleus"/>
    <property type="evidence" value="ECO:0000314"/>
    <property type="project" value="UniProtKB"/>
</dbReference>
<dbReference type="GO" id="GO:0003700">
    <property type="term" value="F:DNA-binding transcription factor activity"/>
    <property type="evidence" value="ECO:0000250"/>
    <property type="project" value="UniProtKB"/>
</dbReference>
<dbReference type="GO" id="GO:0000981">
    <property type="term" value="F:DNA-binding transcription factor activity, RNA polymerase II-specific"/>
    <property type="evidence" value="ECO:0000318"/>
    <property type="project" value="GO_Central"/>
</dbReference>
<dbReference type="GO" id="GO:0000978">
    <property type="term" value="F:RNA polymerase II cis-regulatory region sequence-specific DNA binding"/>
    <property type="evidence" value="ECO:0000318"/>
    <property type="project" value="GO_Central"/>
</dbReference>
<dbReference type="GO" id="GO:0008270">
    <property type="term" value="F:zinc ion binding"/>
    <property type="evidence" value="ECO:0007669"/>
    <property type="project" value="UniProtKB-KW"/>
</dbReference>
<dbReference type="GO" id="GO:0007417">
    <property type="term" value="P:central nervous system development"/>
    <property type="evidence" value="ECO:0000318"/>
    <property type="project" value="GO_Central"/>
</dbReference>
<dbReference type="GO" id="GO:0021904">
    <property type="term" value="P:dorsal/ventral neural tube patterning"/>
    <property type="evidence" value="ECO:0000315"/>
    <property type="project" value="UniProtKB"/>
</dbReference>
<dbReference type="GO" id="GO:0014033">
    <property type="term" value="P:neural crest cell differentiation"/>
    <property type="evidence" value="ECO:0000315"/>
    <property type="project" value="UniProtKB"/>
</dbReference>
<dbReference type="GO" id="GO:0014034">
    <property type="term" value="P:neural crest cell fate commitment"/>
    <property type="evidence" value="ECO:0000315"/>
    <property type="project" value="UniProtKB"/>
</dbReference>
<dbReference type="GO" id="GO:0014029">
    <property type="term" value="P:neural crest formation"/>
    <property type="evidence" value="ECO:0000315"/>
    <property type="project" value="UniProtKB"/>
</dbReference>
<dbReference type="GO" id="GO:0001840">
    <property type="term" value="P:neural plate development"/>
    <property type="evidence" value="ECO:0000315"/>
    <property type="project" value="UniProtKB"/>
</dbReference>
<dbReference type="GO" id="GO:0022008">
    <property type="term" value="P:neurogenesis"/>
    <property type="evidence" value="ECO:0000315"/>
    <property type="project" value="UniProtKB"/>
</dbReference>
<dbReference type="GO" id="GO:0045893">
    <property type="term" value="P:positive regulation of DNA-templated transcription"/>
    <property type="evidence" value="ECO:0000314"/>
    <property type="project" value="UniProtKB"/>
</dbReference>
<dbReference type="GO" id="GO:0042307">
    <property type="term" value="P:positive regulation of protein import into nucleus"/>
    <property type="evidence" value="ECO:0000250"/>
    <property type="project" value="UniProtKB"/>
</dbReference>
<dbReference type="GO" id="GO:0045944">
    <property type="term" value="P:positive regulation of transcription by RNA polymerase II"/>
    <property type="evidence" value="ECO:0000314"/>
    <property type="project" value="UniProtKB"/>
</dbReference>
<dbReference type="GO" id="GO:0030177">
    <property type="term" value="P:positive regulation of Wnt signaling pathway"/>
    <property type="evidence" value="ECO:0000316"/>
    <property type="project" value="UniProtKB"/>
</dbReference>
<dbReference type="GO" id="GO:0006357">
    <property type="term" value="P:regulation of transcription by RNA polymerase II"/>
    <property type="evidence" value="ECO:0000318"/>
    <property type="project" value="GO_Central"/>
</dbReference>
<dbReference type="GO" id="GO:0016055">
    <property type="term" value="P:Wnt signaling pathway"/>
    <property type="evidence" value="ECO:0007669"/>
    <property type="project" value="UniProtKB-KW"/>
</dbReference>
<dbReference type="FunFam" id="3.30.160.60:FF:000035">
    <property type="entry name" value="Zinc finger protein ZIC 1"/>
    <property type="match status" value="1"/>
</dbReference>
<dbReference type="FunFam" id="3.30.160.60:FF:000039">
    <property type="entry name" value="Zinc finger protein ZIC 1"/>
    <property type="match status" value="1"/>
</dbReference>
<dbReference type="FunFam" id="3.30.160.60:FF:000041">
    <property type="entry name" value="Zinc finger protein ZIC 1"/>
    <property type="match status" value="1"/>
</dbReference>
<dbReference type="FunFam" id="3.30.160.60:FF:001330">
    <property type="entry name" value="Zinc finger protein ZIC 4"/>
    <property type="match status" value="1"/>
</dbReference>
<dbReference type="Gene3D" id="3.30.160.60">
    <property type="entry name" value="Classic Zinc Finger"/>
    <property type="match status" value="4"/>
</dbReference>
<dbReference type="InterPro" id="IPR043359">
    <property type="entry name" value="GLI-like"/>
</dbReference>
<dbReference type="InterPro" id="IPR056436">
    <property type="entry name" value="Znf-C2H2_ZIC1-5/GLI1-3-like"/>
</dbReference>
<dbReference type="InterPro" id="IPR036236">
    <property type="entry name" value="Znf_C2H2_sf"/>
</dbReference>
<dbReference type="InterPro" id="IPR013087">
    <property type="entry name" value="Znf_C2H2_type"/>
</dbReference>
<dbReference type="InterPro" id="IPR041643">
    <property type="entry name" value="Znf_ZIC"/>
</dbReference>
<dbReference type="PANTHER" id="PTHR45718">
    <property type="entry name" value="TRANSCRIPTIONAL ACTIVATOR CUBITUS INTERRUPTUS"/>
    <property type="match status" value="1"/>
</dbReference>
<dbReference type="PANTHER" id="PTHR45718:SF4">
    <property type="entry name" value="TRANSCRIPTIONAL ACTIVATOR CUBITUS INTERRUPTUS"/>
    <property type="match status" value="1"/>
</dbReference>
<dbReference type="Pfam" id="PF00096">
    <property type="entry name" value="zf-C2H2"/>
    <property type="match status" value="3"/>
</dbReference>
<dbReference type="Pfam" id="PF23561">
    <property type="entry name" value="zf-C2H2_15"/>
    <property type="match status" value="1"/>
</dbReference>
<dbReference type="Pfam" id="PF18366">
    <property type="entry name" value="zf_ZIC"/>
    <property type="match status" value="1"/>
</dbReference>
<dbReference type="SMART" id="SM00355">
    <property type="entry name" value="ZnF_C2H2"/>
    <property type="match status" value="5"/>
</dbReference>
<dbReference type="SUPFAM" id="SSF57667">
    <property type="entry name" value="beta-beta-alpha zinc fingers"/>
    <property type="match status" value="2"/>
</dbReference>
<dbReference type="PROSITE" id="PS00028">
    <property type="entry name" value="ZINC_FINGER_C2H2_1"/>
    <property type="match status" value="3"/>
</dbReference>
<dbReference type="PROSITE" id="PS50157">
    <property type="entry name" value="ZINC_FINGER_C2H2_2"/>
    <property type="match status" value="4"/>
</dbReference>
<name>ZIC1_XENLA</name>
<proteinExistence type="evidence at transcript level"/>
<reference key="1">
    <citation type="journal article" date="1998" name="Development">
        <title>Xenopus Zic-related-1 and Sox-2, two factors induced by chordin, have distinct activities in the initiation of neural induction.</title>
        <authorList>
            <person name="Mizuseki K."/>
            <person name="Kishi M."/>
            <person name="Matsui M."/>
            <person name="Nakanishi S."/>
            <person name="Sasai Y."/>
        </authorList>
    </citation>
    <scope>NUCLEOTIDE SEQUENCE [MRNA]</scope>
    <scope>FUNCTION</scope>
    <scope>TISSUE SPECIFICITY</scope>
    <scope>DEVELOPMENTAL STAGE</scope>
    <scope>INDUCTION</scope>
    <source>
        <tissue>Neurula</tissue>
    </source>
</reference>
<reference key="2">
    <citation type="journal article" date="1998" name="Development">
        <title>Opl: a zinc finger protein that regulates neural determination and patterning in Xenopus.</title>
        <authorList>
            <person name="Kuo J.S."/>
            <person name="Patel M."/>
            <person name="Gamse J."/>
            <person name="Merzdorf C."/>
            <person name="Liu X."/>
            <person name="Apekin V."/>
            <person name="Sive H."/>
        </authorList>
    </citation>
    <scope>NUCLEOTIDE SEQUENCE [MRNA]</scope>
    <scope>FUNCTION</scope>
    <scope>SUBCELLULAR LOCATION</scope>
    <scope>TISSUE SPECIFICITY</scope>
    <scope>DEVELOPMENTAL STAGE</scope>
    <source>
        <tissue>Embryo</tissue>
    </source>
</reference>
<reference key="3">
    <citation type="journal article" date="1998" name="Mech. Dev.">
        <title>Xenopus Zic family and its role in neural and neural crest development.</title>
        <authorList>
            <person name="Nakata K."/>
            <person name="Nagai T."/>
            <person name="Aruga J."/>
            <person name="Mikoshiba K."/>
        </authorList>
    </citation>
    <scope>NUCLEOTIDE SEQUENCE [MRNA]</scope>
    <scope>FUNCTION</scope>
    <scope>TISSUE SPECIFICITY</scope>
    <scope>DEVELOPMENTAL STAGE</scope>
    <source>
        <tissue>Neurula</tissue>
    </source>
</reference>
<reference key="4">
    <citation type="journal article" date="2000" name="Mech. Dev.">
        <title>A novel member of the Xenopus Zic family, Zic5, mediates neural crest development.</title>
        <authorList>
            <person name="Nakata K."/>
            <person name="Koyabu Y."/>
            <person name="Aruga J."/>
            <person name="Mikoshiba K."/>
        </authorList>
    </citation>
    <scope>INDUCTION</scope>
</reference>
<reference key="5">
    <citation type="journal article" date="2005" name="Development">
        <title>Neural crest determination by co-activation of Pax3 and Zic1 genes in Xenopus ectoderm.</title>
        <authorList>
            <person name="Sato T."/>
            <person name="Sasai N."/>
            <person name="Sasai Y."/>
        </authorList>
    </citation>
    <scope>FUNCTION</scope>
    <scope>TISSUE SPECIFICITY</scope>
</reference>
<reference key="6">
    <citation type="journal article" date="2006" name="Dev. Biol.">
        <title>Identification of a BMP inhibitor-responsive promoter module required for expression of the early neural gene zic1.</title>
        <authorList>
            <person name="Tropepe V."/>
            <person name="Li S."/>
            <person name="Dickinson A."/>
            <person name="Gamse J.T."/>
            <person name="Sive H.L."/>
        </authorList>
    </citation>
    <scope>TISSUE SPECIFICITY</scope>
    <scope>INDUCTION</scope>
</reference>
<reference key="7">
    <citation type="journal article" date="2006" name="Dev. Dyn.">
        <title>The Xfeb gene is directly upregulated by Zic1 during early neural development.</title>
        <authorList>
            <person name="Li S."/>
            <person name="Shin Y."/>
            <person name="Cho K.W."/>
            <person name="Merzdorf C.S."/>
        </authorList>
    </citation>
    <scope>FUNCTION</scope>
</reference>
<reference key="8">
    <citation type="journal article" date="2006" name="Dev. Dyn.">
        <title>Xenopus Zic4: conservation and diversification of expression profiles and protein function among the Xenopus Zic family.</title>
        <authorList>
            <person name="Fujimi T.J."/>
            <person name="Mikoshiba K."/>
            <person name="Aruga J."/>
        </authorList>
    </citation>
    <scope>TISSUE SPECIFICITY</scope>
    <scope>DEVELOPMENTAL STAGE</scope>
</reference>
<reference key="9">
    <citation type="journal article" date="2006" name="Int. J. Dev. Biol.">
        <title>The zic1 gene is an activator of Wnt signaling.</title>
        <authorList>
            <person name="Merzdorf C.S."/>
            <person name="Sive H.L."/>
        </authorList>
    </citation>
    <scope>FUNCTION</scope>
</reference>
<reference key="10">
    <citation type="journal article" date="2007" name="Mol. Biol. Cell">
        <title>The activity of Pax3 and Zic1 regulates three distinct cell fates at the neural plate border.</title>
        <authorList>
            <person name="Hong C.-S."/>
            <person name="Saint-Jeannet J.-P."/>
        </authorList>
    </citation>
    <scope>FUNCTION</scope>
    <scope>TISSUE SPECIFICITY</scope>
</reference>
<organism>
    <name type="scientific">Xenopus laevis</name>
    <name type="common">African clawed frog</name>
    <dbReference type="NCBI Taxonomy" id="8355"/>
    <lineage>
        <taxon>Eukaryota</taxon>
        <taxon>Metazoa</taxon>
        <taxon>Chordata</taxon>
        <taxon>Craniata</taxon>
        <taxon>Vertebrata</taxon>
        <taxon>Euteleostomi</taxon>
        <taxon>Amphibia</taxon>
        <taxon>Batrachia</taxon>
        <taxon>Anura</taxon>
        <taxon>Pipoidea</taxon>
        <taxon>Pipidae</taxon>
        <taxon>Xenopodinae</taxon>
        <taxon>Xenopus</taxon>
        <taxon>Xenopus</taxon>
    </lineage>
</organism>
<protein>
    <recommendedName>
        <fullName>Zinc finger protein ZIC 1</fullName>
        <shortName>XZic1</shortName>
        <shortName>XlZic1</shortName>
    </recommendedName>
    <alternativeName>
        <fullName>ODD-paired-like</fullName>
        <shortName>Xopl</shortName>
    </alternativeName>
    <alternativeName>
        <fullName>ZIC-related protein 1</fullName>
        <shortName>ZIC-r1</shortName>
    </alternativeName>
    <alternativeName>
        <fullName>Zinc finger protein of the cerebellum 1</fullName>
    </alternativeName>
</protein>
<sequence length="443" mass="48253">MLLDAGAQYPAIGVTTFGSSRHHSAGDVTDREVALGINPFADGMGAFKLNPSSHDLASGQTAFTSQAPGYAAAALGHHHHPGHVSSYSSAAFNSTRDFLFRNRGFGEAASAQHSLFASAAGGFPGPHGPHADTTGHLIFPGLHEQAASHASPNVVNGQMRLGFSGDMYGRPDQYGQVTSPRSEHYASSQLHGYGPMNMNMAAHHGAGAFFRYMRQPIKQELICKWIEPEQLANPKKSCNKTFSTMHELVTHVTVEHVGGPEQSNHICVWEECPREGKPFKAKYKLINHIRVHTGEKPFPCPFPGCGKVFARSENLKIHKRTHTGEKPFKCEFEGCDRRFANSSDRKKHMHVHTSDKPYLCKMCDKSYTHPSSLRKHMKVHEASSQGSQPSPAASSGYESSTPPTIVSPSAENQSTSSLSPSSSAVHHTSNHSTLSSNFNEWYV</sequence>
<evidence type="ECO:0000250" key="1"/>
<evidence type="ECO:0000255" key="2">
    <source>
        <dbReference type="PROSITE-ProRule" id="PRU00042"/>
    </source>
</evidence>
<evidence type="ECO:0000256" key="3">
    <source>
        <dbReference type="SAM" id="MobiDB-lite"/>
    </source>
</evidence>
<evidence type="ECO:0000269" key="4">
    <source>
    </source>
</evidence>
<evidence type="ECO:0000269" key="5">
    <source>
    </source>
</evidence>
<evidence type="ECO:0000269" key="6">
    <source>
    </source>
</evidence>
<evidence type="ECO:0000269" key="7">
    <source>
    </source>
</evidence>
<evidence type="ECO:0000269" key="8">
    <source>
    </source>
</evidence>
<evidence type="ECO:0000269" key="9">
    <source>
    </source>
</evidence>
<evidence type="ECO:0000269" key="10">
    <source>
    </source>
</evidence>
<evidence type="ECO:0000269" key="11">
    <source>
    </source>
</evidence>
<evidence type="ECO:0000269" key="12">
    <source>
    </source>
</evidence>
<evidence type="ECO:0000269" key="13">
    <source>
    </source>
</evidence>
<evidence type="ECO:0000305" key="14"/>